<organism>
    <name type="scientific">Euglena gracilis</name>
    <dbReference type="NCBI Taxonomy" id="3039"/>
    <lineage>
        <taxon>Eukaryota</taxon>
        <taxon>Discoba</taxon>
        <taxon>Euglenozoa</taxon>
        <taxon>Euglenida</taxon>
        <taxon>Spirocuta</taxon>
        <taxon>Euglenophyceae</taxon>
        <taxon>Euglenales</taxon>
        <taxon>Euglenaceae</taxon>
        <taxon>Euglena</taxon>
    </lineage>
</organism>
<reference key="1">
    <citation type="journal article" date="2002" name="Nucleic Acids Res.">
        <title>Identification and comparative analysis of the chloroplast alpha-subunit gene of DNA-dependent RNA polymerase from seven Euglena species.</title>
        <authorList>
            <person name="Sheveleva E.V."/>
            <person name="Giordani N.V."/>
            <person name="Hallick R.B."/>
        </authorList>
    </citation>
    <scope>NUCLEOTIDE SEQUENCE [GENOMIC DNA]</scope>
    <source>
        <strain>Z / UTEX 753</strain>
    </source>
</reference>
<reference key="2">
    <citation type="journal article" date="1993" name="Nucleic Acids Res.">
        <title>Complete sequence of Euglena gracilis chloroplast DNA.</title>
        <authorList>
            <person name="Hallick R.B."/>
            <person name="Hong L."/>
            <person name="Drager R.G."/>
            <person name="Favreau M.R."/>
            <person name="Monfort A."/>
            <person name="Orsat B."/>
            <person name="Spielmann A."/>
            <person name="Stutz E."/>
        </authorList>
    </citation>
    <scope>NUCLEOTIDE SEQUENCE [LARGE SCALE GENOMIC DNA]</scope>
    <source>
        <strain>Z / UTEX 753</strain>
    </source>
</reference>
<gene>
    <name type="primary">rpoA</name>
</gene>
<feature type="chain" id="PRO_0000175507" description="DNA-directed RNA polymerase subunit alpha">
    <location>
        <begin position="1"/>
        <end position="216"/>
    </location>
</feature>
<geneLocation type="chloroplast"/>
<name>RPOA_EUGGR</name>
<protein>
    <recommendedName>
        <fullName>DNA-directed RNA polymerase subunit alpha</fullName>
        <shortName>PEP</shortName>
        <ecNumber>2.7.7.6</ecNumber>
    </recommendedName>
    <alternativeName>
        <fullName>Plastid-encoded RNA polymerase subunit alpha</fullName>
        <shortName>RNA polymerase subunit alpha</shortName>
    </alternativeName>
</protein>
<accession>P48337</accession>
<accession>Q8SN98</accession>
<evidence type="ECO:0000250" key="1"/>
<evidence type="ECO:0000305" key="2"/>
<dbReference type="EC" id="2.7.7.6"/>
<dbReference type="EMBL" id="X70810">
    <property type="protein sequence ID" value="CAC69148.1"/>
    <property type="molecule type" value="Genomic_DNA"/>
</dbReference>
<dbReference type="EMBL" id="Z11874">
    <property type="status" value="NOT_ANNOTATED_CDS"/>
    <property type="molecule type" value="Genomic_DNA"/>
</dbReference>
<dbReference type="SMR" id="P48337"/>
<dbReference type="GO" id="GO:0009507">
    <property type="term" value="C:chloroplast"/>
    <property type="evidence" value="ECO:0007669"/>
    <property type="project" value="UniProtKB-SubCell"/>
</dbReference>
<dbReference type="GO" id="GO:0000428">
    <property type="term" value="C:DNA-directed RNA polymerase complex"/>
    <property type="evidence" value="ECO:0007669"/>
    <property type="project" value="UniProtKB-KW"/>
</dbReference>
<dbReference type="GO" id="GO:0005739">
    <property type="term" value="C:mitochondrion"/>
    <property type="evidence" value="ECO:0007669"/>
    <property type="project" value="GOC"/>
</dbReference>
<dbReference type="GO" id="GO:0003899">
    <property type="term" value="F:DNA-directed RNA polymerase activity"/>
    <property type="evidence" value="ECO:0007669"/>
    <property type="project" value="UniProtKB-EC"/>
</dbReference>
<dbReference type="GO" id="GO:0046983">
    <property type="term" value="F:protein dimerization activity"/>
    <property type="evidence" value="ECO:0007669"/>
    <property type="project" value="InterPro"/>
</dbReference>
<dbReference type="GO" id="GO:0006351">
    <property type="term" value="P:DNA-templated transcription"/>
    <property type="evidence" value="ECO:0007669"/>
    <property type="project" value="InterPro"/>
</dbReference>
<dbReference type="Gene3D" id="2.170.120.12">
    <property type="entry name" value="DNA-directed RNA polymerase, insert domain"/>
    <property type="match status" value="1"/>
</dbReference>
<dbReference type="InterPro" id="IPR036603">
    <property type="entry name" value="RBP11-like"/>
</dbReference>
<dbReference type="InterPro" id="IPR036643">
    <property type="entry name" value="RNApol_insert_sf"/>
</dbReference>
<dbReference type="SUPFAM" id="SSF56553">
    <property type="entry name" value="Insert subdomain of RNA polymerase alpha subunit"/>
    <property type="match status" value="1"/>
</dbReference>
<dbReference type="SUPFAM" id="SSF55257">
    <property type="entry name" value="RBP11-like subunits of RNA polymerase"/>
    <property type="match status" value="1"/>
</dbReference>
<keyword id="KW-0150">Chloroplast</keyword>
<keyword id="KW-0240">DNA-directed RNA polymerase</keyword>
<keyword id="KW-0548">Nucleotidyltransferase</keyword>
<keyword id="KW-0934">Plastid</keyword>
<keyword id="KW-0804">Transcription</keyword>
<keyword id="KW-0808">Transferase</keyword>
<proteinExistence type="inferred from homology"/>
<comment type="function">
    <text evidence="1">DNA-dependent RNA polymerase catalyzes the transcription of DNA into RNA using the four ribonucleoside triphosphates as substrates.</text>
</comment>
<comment type="catalytic activity">
    <reaction>
        <text>RNA(n) + a ribonucleoside 5'-triphosphate = RNA(n+1) + diphosphate</text>
        <dbReference type="Rhea" id="RHEA:21248"/>
        <dbReference type="Rhea" id="RHEA-COMP:14527"/>
        <dbReference type="Rhea" id="RHEA-COMP:17342"/>
        <dbReference type="ChEBI" id="CHEBI:33019"/>
        <dbReference type="ChEBI" id="CHEBI:61557"/>
        <dbReference type="ChEBI" id="CHEBI:140395"/>
        <dbReference type="EC" id="2.7.7.6"/>
    </reaction>
</comment>
<comment type="subunit">
    <text evidence="1">In plastids the minimal PEP RNA polymerase catalytic core is composed of four subunits: alpha, beta, beta', and beta''. When a (nuclear-encoded) sigma factor is associated with the core the holoenzyme is formed, which can initiate transcription (By similarity).</text>
</comment>
<comment type="subcellular location">
    <subcellularLocation>
        <location>Plastid</location>
        <location>Chloroplast</location>
    </subcellularLocation>
</comment>
<comment type="similarity">
    <text evidence="2">Belongs to the RNA polymerase alpha chain family.</text>
</comment>
<comment type="caution">
    <text evidence="2">The C-terminal domain thought to be required for interaction with some regulatory factors is missing from this protein.</text>
</comment>
<sequence>MKYLKIYVLRSRLLKDGNLAFFKVKNLQFFDKNFFVTEIRRYLLLDLESWNITNVMFFVTNNLKNTSTFHVVHNFLGLEELKQSLLEITKKFKLLRFKLCSKSYQGNKFFAVLNAFEVKDFLSGDIIFPPHLKLLNSRELLFTKISFNITLKILLKIEAKKASFQKPIKRLNLIIEKDEFFDNYMIFDLTTDGSVTPFNAFIKALQSSNLVTLTNA</sequence>